<keyword id="KW-0963">Cytoplasm</keyword>
<keyword id="KW-0324">Glycolysis</keyword>
<keyword id="KW-0413">Isomerase</keyword>
<keyword id="KW-0464">Manganese</keyword>
<keyword id="KW-0479">Metal-binding</keyword>
<keyword id="KW-1185">Reference proteome</keyword>
<accession>P35494</accession>
<sequence length="559" mass="61067">MGSSGDAWKLKDHPKLPKGKTVAVIVLDGWGEAKPNEFNAIHVAETPVMYSLKNGAPEKWRLIKAHGNAVGLPTEDDMGNSEVGHNALGAGRIFAQGAKLVDLALASGKIYEGEGFKYVKECFEKGTLHLIGLLSDGGVHSRLDQVQLLLKGAAKHGAKRIRVHALTDGRDVLDGSSVGFMETLENSLAQLREKGIDAQVASGGGRMYVTMDRYENDWDVVKRGWDAQVLGEAPHKFKDPVEAVKKLRQEPNANDQYLAPFVIVDDNGKPVAAILDGDAVVTFNFRADRMVMLAKALEYENFDKFDRVRVPKIRYAGMLQYHGELQLPSHYLVSPPEIARHSGEYLVRNGVRTFACSETVKFGHVTFFWNGNRSGYFNEKLEEYVEIPSDSGITFNVKPKMKALEIAERTRDAILSGKFDQVRVNLPNGDMVGHTGDIKATIEACKSADEAVKMILEAIEQVGGIYLVTADHGNAEDMVKRNKKGEPALDKNGNIQILTSHTCEPVPIAIGGPGLAPGVRFRQDLPTGGLANVAATFMNLHGSEAPSDYEPSLIEVVDN</sequence>
<evidence type="ECO:0000250" key="1"/>
<evidence type="ECO:0000250" key="2">
    <source>
        <dbReference type="UniProtKB" id="Q9X519"/>
    </source>
</evidence>
<evidence type="ECO:0000305" key="3"/>
<proteinExistence type="evidence at transcript level"/>
<organism>
    <name type="scientific">Nicotiana tabacum</name>
    <name type="common">Common tobacco</name>
    <dbReference type="NCBI Taxonomy" id="4097"/>
    <lineage>
        <taxon>Eukaryota</taxon>
        <taxon>Viridiplantae</taxon>
        <taxon>Streptophyta</taxon>
        <taxon>Embryophyta</taxon>
        <taxon>Tracheophyta</taxon>
        <taxon>Spermatophyta</taxon>
        <taxon>Magnoliopsida</taxon>
        <taxon>eudicotyledons</taxon>
        <taxon>Gunneridae</taxon>
        <taxon>Pentapetalae</taxon>
        <taxon>asterids</taxon>
        <taxon>lamiids</taxon>
        <taxon>Solanales</taxon>
        <taxon>Solanaceae</taxon>
        <taxon>Nicotianoideae</taxon>
        <taxon>Nicotianeae</taxon>
        <taxon>Nicotiana</taxon>
    </lineage>
</organism>
<dbReference type="EC" id="5.4.2.12"/>
<dbReference type="EMBL" id="X70651">
    <property type="protein sequence ID" value="CAA49994.1"/>
    <property type="molecule type" value="mRNA"/>
</dbReference>
<dbReference type="PIR" id="S44373">
    <property type="entry name" value="S44373"/>
</dbReference>
<dbReference type="RefSeq" id="NP_001311960.1">
    <property type="nucleotide sequence ID" value="NM_001325031.1"/>
</dbReference>
<dbReference type="SMR" id="P35494"/>
<dbReference type="STRING" id="4097.P35494"/>
<dbReference type="PaxDb" id="4097-P35494"/>
<dbReference type="ProMEX" id="P35494"/>
<dbReference type="GeneID" id="107769473"/>
<dbReference type="KEGG" id="nta:107769473"/>
<dbReference type="OrthoDB" id="952271at2759"/>
<dbReference type="UniPathway" id="UPA00109">
    <property type="reaction ID" value="UER00186"/>
</dbReference>
<dbReference type="Proteomes" id="UP000084051">
    <property type="component" value="Unplaced"/>
</dbReference>
<dbReference type="GO" id="GO:0005737">
    <property type="term" value="C:cytoplasm"/>
    <property type="evidence" value="ECO:0007669"/>
    <property type="project" value="UniProtKB-SubCell"/>
</dbReference>
<dbReference type="GO" id="GO:0030145">
    <property type="term" value="F:manganese ion binding"/>
    <property type="evidence" value="ECO:0000318"/>
    <property type="project" value="GO_Central"/>
</dbReference>
<dbReference type="GO" id="GO:0004619">
    <property type="term" value="F:phosphoglycerate mutase activity"/>
    <property type="evidence" value="ECO:0000318"/>
    <property type="project" value="GO_Central"/>
</dbReference>
<dbReference type="GO" id="GO:0005975">
    <property type="term" value="P:carbohydrate metabolic process"/>
    <property type="evidence" value="ECO:0000318"/>
    <property type="project" value="GO_Central"/>
</dbReference>
<dbReference type="GO" id="GO:0006007">
    <property type="term" value="P:glucose catabolic process"/>
    <property type="evidence" value="ECO:0007669"/>
    <property type="project" value="InterPro"/>
</dbReference>
<dbReference type="GO" id="GO:0006096">
    <property type="term" value="P:glycolytic process"/>
    <property type="evidence" value="ECO:0007669"/>
    <property type="project" value="UniProtKB-UniPathway"/>
</dbReference>
<dbReference type="CDD" id="cd16010">
    <property type="entry name" value="iPGM"/>
    <property type="match status" value="1"/>
</dbReference>
<dbReference type="FunFam" id="3.40.1450.10:FF:000002">
    <property type="entry name" value="2,3-bisphosphoglycerate-independent phosphoglycerate mutase"/>
    <property type="match status" value="1"/>
</dbReference>
<dbReference type="Gene3D" id="3.40.720.10">
    <property type="entry name" value="Alkaline Phosphatase, subunit A"/>
    <property type="match status" value="1"/>
</dbReference>
<dbReference type="Gene3D" id="3.40.1450.10">
    <property type="entry name" value="BPG-independent phosphoglycerate mutase, domain B"/>
    <property type="match status" value="1"/>
</dbReference>
<dbReference type="InterPro" id="IPR017850">
    <property type="entry name" value="Alkaline_phosphatase_core_sf"/>
</dbReference>
<dbReference type="InterPro" id="IPR011258">
    <property type="entry name" value="BPG-indep_PGM_N"/>
</dbReference>
<dbReference type="InterPro" id="IPR006124">
    <property type="entry name" value="Metalloenzyme"/>
</dbReference>
<dbReference type="InterPro" id="IPR036646">
    <property type="entry name" value="PGAM_B_sf"/>
</dbReference>
<dbReference type="InterPro" id="IPR005995">
    <property type="entry name" value="Pgm_bpd_ind"/>
</dbReference>
<dbReference type="NCBIfam" id="TIGR01307">
    <property type="entry name" value="pgm_bpd_ind"/>
    <property type="match status" value="1"/>
</dbReference>
<dbReference type="PANTHER" id="PTHR31637">
    <property type="entry name" value="2,3-BISPHOSPHOGLYCERATE-INDEPENDENT PHOSPHOGLYCERATE MUTASE"/>
    <property type="match status" value="1"/>
</dbReference>
<dbReference type="PANTHER" id="PTHR31637:SF7">
    <property type="entry name" value="2,3-BISPHOSPHOGLYCERATE-INDEPENDENT PHOSPHOGLYCERATE MUTASE 1"/>
    <property type="match status" value="1"/>
</dbReference>
<dbReference type="Pfam" id="PF06415">
    <property type="entry name" value="iPGM_N"/>
    <property type="match status" value="1"/>
</dbReference>
<dbReference type="Pfam" id="PF01676">
    <property type="entry name" value="Metalloenzyme"/>
    <property type="match status" value="1"/>
</dbReference>
<dbReference type="PIRSF" id="PIRSF001492">
    <property type="entry name" value="IPGAM"/>
    <property type="match status" value="1"/>
</dbReference>
<dbReference type="SUPFAM" id="SSF64158">
    <property type="entry name" value="2,3-Bisphosphoglycerate-independent phosphoglycerate mutase, substrate-binding domain"/>
    <property type="match status" value="1"/>
</dbReference>
<dbReference type="SUPFAM" id="SSF53649">
    <property type="entry name" value="Alkaline phosphatase-like"/>
    <property type="match status" value="1"/>
</dbReference>
<reference key="1">
    <citation type="journal article" date="1993" name="Plant Mol. Biol.">
        <title>Higher-plant cofactor-independent phosphoglyceromutase: purification, molecular characterization and expression.</title>
        <authorList>
            <person name="Huang Y."/>
            <person name="Blakeley S.D."/>
            <person name="McAleese S.M."/>
            <person name="Fothergill-Gilmore L.A."/>
            <person name="Dennis D.T."/>
        </authorList>
    </citation>
    <scope>NUCLEOTIDE SEQUENCE [MRNA]</scope>
    <source>
        <tissue>Leaf</tissue>
    </source>
</reference>
<name>PMGI_TOBAC</name>
<comment type="function">
    <text evidence="1">Catalyzes the interconversion of 2-phosphoglycerate and 3-phosphoglycerate.</text>
</comment>
<comment type="catalytic activity">
    <reaction>
        <text>(2R)-2-phosphoglycerate = (2R)-3-phosphoglycerate</text>
        <dbReference type="Rhea" id="RHEA:15901"/>
        <dbReference type="ChEBI" id="CHEBI:58272"/>
        <dbReference type="ChEBI" id="CHEBI:58289"/>
        <dbReference type="EC" id="5.4.2.12"/>
    </reaction>
</comment>
<comment type="cofactor">
    <cofactor evidence="1">
        <name>Mn(2+)</name>
        <dbReference type="ChEBI" id="CHEBI:29035"/>
    </cofactor>
    <text evidence="1">Binds 2 manganese ions per subunit.</text>
</comment>
<comment type="pathway">
    <text>Carbohydrate degradation; glycolysis; pyruvate from D-glyceraldehyde 3-phosphate: step 3/5.</text>
</comment>
<comment type="subunit">
    <text>Monomer.</text>
</comment>
<comment type="subcellular location">
    <subcellularLocation>
        <location>Cytoplasm</location>
    </subcellularLocation>
</comment>
<comment type="tissue specificity">
    <text>Found ubiquitously in germinating seed.</text>
</comment>
<comment type="developmental stage">
    <text>Expression most important during germination, it decreases during development.</text>
</comment>
<comment type="similarity">
    <text evidence="3">Belongs to the BPG-independent phosphoglycerate mutase family.</text>
</comment>
<feature type="chain" id="PRO_0000212114" description="2,3-bisphosphoglycerate-independent phosphoglycerate mutase">
    <location>
        <begin position="1"/>
        <end position="559"/>
    </location>
</feature>
<feature type="active site" description="Phosphoserine intermediate" evidence="2">
    <location>
        <position position="81"/>
    </location>
</feature>
<feature type="binding site" evidence="2">
    <location>
        <position position="28"/>
    </location>
    <ligand>
        <name>Mn(2+)</name>
        <dbReference type="ChEBI" id="CHEBI:29035"/>
        <label>2</label>
    </ligand>
</feature>
<feature type="binding site" evidence="2">
    <location>
        <position position="81"/>
    </location>
    <ligand>
        <name>Mn(2+)</name>
        <dbReference type="ChEBI" id="CHEBI:29035"/>
        <label>2</label>
    </ligand>
</feature>
<feature type="binding site" evidence="2">
    <location>
        <position position="140"/>
    </location>
    <ligand>
        <name>substrate</name>
    </ligand>
</feature>
<feature type="binding site" evidence="2">
    <location>
        <begin position="170"/>
        <end position="171"/>
    </location>
    <ligand>
        <name>substrate</name>
    </ligand>
</feature>
<feature type="binding site" evidence="2">
    <location>
        <position position="206"/>
    </location>
    <ligand>
        <name>substrate</name>
    </ligand>
</feature>
<feature type="binding site" evidence="2">
    <location>
        <position position="213"/>
    </location>
    <ligand>
        <name>substrate</name>
    </ligand>
</feature>
<feature type="binding site" evidence="2">
    <location>
        <begin position="286"/>
        <end position="289"/>
    </location>
    <ligand>
        <name>substrate</name>
    </ligand>
</feature>
<feature type="binding site" evidence="2">
    <location>
        <position position="361"/>
    </location>
    <ligand>
        <name>substrate</name>
    </ligand>
</feature>
<feature type="binding site" evidence="2">
    <location>
        <position position="430"/>
    </location>
    <ligand>
        <name>Mn(2+)</name>
        <dbReference type="ChEBI" id="CHEBI:29035"/>
        <label>1</label>
    </ligand>
</feature>
<feature type="binding site" evidence="2">
    <location>
        <position position="434"/>
    </location>
    <ligand>
        <name>Mn(2+)</name>
        <dbReference type="ChEBI" id="CHEBI:29035"/>
        <label>1</label>
    </ligand>
</feature>
<feature type="binding site" evidence="2">
    <location>
        <position position="471"/>
    </location>
    <ligand>
        <name>Mn(2+)</name>
        <dbReference type="ChEBI" id="CHEBI:29035"/>
        <label>2</label>
    </ligand>
</feature>
<feature type="binding site" evidence="2">
    <location>
        <position position="472"/>
    </location>
    <ligand>
        <name>Mn(2+)</name>
        <dbReference type="ChEBI" id="CHEBI:29035"/>
        <label>2</label>
    </ligand>
</feature>
<feature type="binding site" evidence="2">
    <location>
        <position position="501"/>
    </location>
    <ligand>
        <name>Mn(2+)</name>
        <dbReference type="ChEBI" id="CHEBI:29035"/>
        <label>1</label>
    </ligand>
</feature>
<protein>
    <recommendedName>
        <fullName>2,3-bisphosphoglycerate-independent phosphoglycerate mutase</fullName>
        <shortName>BPG-independent PGAM</shortName>
        <shortName>Phosphoglyceromutase</shortName>
        <ecNumber>5.4.2.12</ecNumber>
    </recommendedName>
    <alternativeName>
        <fullName>PGAM-I</fullName>
    </alternativeName>
</protein>